<sequence>MNAPLDRPANSVDPKLLEILVCPMTKGPLEYDAAKQELISRSAKLAYPIRDGIPIMLPEEARKIG</sequence>
<accession>A5E8U9</accession>
<organism>
    <name type="scientific">Bradyrhizobium sp. (strain BTAi1 / ATCC BAA-1182)</name>
    <dbReference type="NCBI Taxonomy" id="288000"/>
    <lineage>
        <taxon>Bacteria</taxon>
        <taxon>Pseudomonadati</taxon>
        <taxon>Pseudomonadota</taxon>
        <taxon>Alphaproteobacteria</taxon>
        <taxon>Hyphomicrobiales</taxon>
        <taxon>Nitrobacteraceae</taxon>
        <taxon>Bradyrhizobium</taxon>
    </lineage>
</organism>
<reference key="1">
    <citation type="journal article" date="2007" name="Science">
        <title>Legumes symbioses: absence of nod genes in photosynthetic bradyrhizobia.</title>
        <authorList>
            <person name="Giraud E."/>
            <person name="Moulin L."/>
            <person name="Vallenet D."/>
            <person name="Barbe V."/>
            <person name="Cytryn E."/>
            <person name="Avarre J.-C."/>
            <person name="Jaubert M."/>
            <person name="Simon D."/>
            <person name="Cartieaux F."/>
            <person name="Prin Y."/>
            <person name="Bena G."/>
            <person name="Hannibal L."/>
            <person name="Fardoux J."/>
            <person name="Kojadinovic M."/>
            <person name="Vuillet L."/>
            <person name="Lajus A."/>
            <person name="Cruveiller S."/>
            <person name="Rouy Z."/>
            <person name="Mangenot S."/>
            <person name="Segurens B."/>
            <person name="Dossat C."/>
            <person name="Franck W.L."/>
            <person name="Chang W.-S."/>
            <person name="Saunders E."/>
            <person name="Bruce D."/>
            <person name="Richardson P."/>
            <person name="Normand P."/>
            <person name="Dreyfus B."/>
            <person name="Pignol D."/>
            <person name="Stacey G."/>
            <person name="Emerich D."/>
            <person name="Vermeglio A."/>
            <person name="Medigue C."/>
            <person name="Sadowsky M."/>
        </authorList>
    </citation>
    <scope>NUCLEOTIDE SEQUENCE [LARGE SCALE GENOMIC DNA]</scope>
    <source>
        <strain>BTAi1 / ATCC BAA-1182</strain>
    </source>
</reference>
<keyword id="KW-1185">Reference proteome</keyword>
<protein>
    <recommendedName>
        <fullName evidence="1">UPF0434 protein BBta_0300</fullName>
    </recommendedName>
</protein>
<name>Y300_BRASB</name>
<proteinExistence type="inferred from homology"/>
<feature type="chain" id="PRO_1000138288" description="UPF0434 protein BBta_0300">
    <location>
        <begin position="1"/>
        <end position="65"/>
    </location>
</feature>
<gene>
    <name type="ordered locus">BBta_0300</name>
</gene>
<comment type="similarity">
    <text evidence="1">Belongs to the UPF0434 family.</text>
</comment>
<dbReference type="EMBL" id="CP000494">
    <property type="protein sequence ID" value="ABQ32593.1"/>
    <property type="molecule type" value="Genomic_DNA"/>
</dbReference>
<dbReference type="RefSeq" id="WP_012040647.1">
    <property type="nucleotide sequence ID" value="NC_009485.1"/>
</dbReference>
<dbReference type="SMR" id="A5E8U9"/>
<dbReference type="STRING" id="288000.BBta_0300"/>
<dbReference type="KEGG" id="bbt:BBta_0300"/>
<dbReference type="eggNOG" id="COG2835">
    <property type="taxonomic scope" value="Bacteria"/>
</dbReference>
<dbReference type="HOGENOM" id="CLU_155659_2_2_5"/>
<dbReference type="OrthoDB" id="9812205at2"/>
<dbReference type="Proteomes" id="UP000000246">
    <property type="component" value="Chromosome"/>
</dbReference>
<dbReference type="GO" id="GO:0005829">
    <property type="term" value="C:cytosol"/>
    <property type="evidence" value="ECO:0007669"/>
    <property type="project" value="TreeGrafter"/>
</dbReference>
<dbReference type="FunFam" id="2.20.25.10:FF:000002">
    <property type="entry name" value="UPF0434 protein YcaR"/>
    <property type="match status" value="1"/>
</dbReference>
<dbReference type="Gene3D" id="2.20.25.10">
    <property type="match status" value="1"/>
</dbReference>
<dbReference type="HAMAP" id="MF_01187">
    <property type="entry name" value="UPF0434"/>
    <property type="match status" value="1"/>
</dbReference>
<dbReference type="InterPro" id="IPR005651">
    <property type="entry name" value="Trm112-like"/>
</dbReference>
<dbReference type="PANTHER" id="PTHR33505:SF4">
    <property type="entry name" value="PROTEIN PREY, MITOCHONDRIAL"/>
    <property type="match status" value="1"/>
</dbReference>
<dbReference type="PANTHER" id="PTHR33505">
    <property type="entry name" value="ZGC:162634"/>
    <property type="match status" value="1"/>
</dbReference>
<dbReference type="Pfam" id="PF03966">
    <property type="entry name" value="Trm112p"/>
    <property type="match status" value="1"/>
</dbReference>
<dbReference type="SUPFAM" id="SSF158997">
    <property type="entry name" value="Trm112p-like"/>
    <property type="match status" value="1"/>
</dbReference>
<evidence type="ECO:0000255" key="1">
    <source>
        <dbReference type="HAMAP-Rule" id="MF_01187"/>
    </source>
</evidence>